<organism>
    <name type="scientific">Escherichia coli O157:H7 (strain EC4115 / EHEC)</name>
    <dbReference type="NCBI Taxonomy" id="444450"/>
    <lineage>
        <taxon>Bacteria</taxon>
        <taxon>Pseudomonadati</taxon>
        <taxon>Pseudomonadota</taxon>
        <taxon>Gammaproteobacteria</taxon>
        <taxon>Enterobacterales</taxon>
        <taxon>Enterobacteriaceae</taxon>
        <taxon>Escherichia</taxon>
    </lineage>
</organism>
<reference key="1">
    <citation type="journal article" date="2011" name="Proc. Natl. Acad. Sci. U.S.A.">
        <title>Genomic anatomy of Escherichia coli O157:H7 outbreaks.</title>
        <authorList>
            <person name="Eppinger M."/>
            <person name="Mammel M.K."/>
            <person name="Leclerc J.E."/>
            <person name="Ravel J."/>
            <person name="Cebula T.A."/>
        </authorList>
    </citation>
    <scope>NUCLEOTIDE SEQUENCE [LARGE SCALE GENOMIC DNA]</scope>
    <source>
        <strain>EC4115 / EHEC</strain>
    </source>
</reference>
<comment type="function">
    <text evidence="1">Protein and nucleotide deglycase that catalyzes the deglycation of the Maillard adducts formed between amino groups of proteins or nucleotides and reactive carbonyl groups of glyoxals. Thus, functions as a protein deglycase that repairs methylglyoxal- and glyoxal-glycated proteins, and releases repaired proteins and lactate or glycolate, respectively. Deglycates cysteine, arginine and lysine residues in proteins, and thus reactivates these proteins by reversing glycation by glyoxals. Acts on early glycation intermediates (hemithioacetals and aminocarbinols), preventing the formation of Schiff bases and advanced glycation endproducts (AGE). Also functions as a nucleotide deglycase able to repair glycated guanine in the free nucleotide pool (GTP, GDP, GMP, dGTP) and in DNA and RNA. Is thus involved in a major nucleotide repair system named guanine glycation repair (GG repair), dedicated to reversing methylglyoxal and glyoxal damage via nucleotide sanitization and direct nucleic acid repair. Plays an important role in protecting cells from carbonyl stress.</text>
</comment>
<comment type="catalytic activity">
    <reaction evidence="1">
        <text>N(omega)-(1-hydroxy-2-oxopropyl)-L-arginyl-[protein] + H2O = lactate + L-arginyl-[protein] + H(+)</text>
        <dbReference type="Rhea" id="RHEA:49548"/>
        <dbReference type="Rhea" id="RHEA-COMP:10532"/>
        <dbReference type="Rhea" id="RHEA-COMP:12428"/>
        <dbReference type="ChEBI" id="CHEBI:15377"/>
        <dbReference type="ChEBI" id="CHEBI:15378"/>
        <dbReference type="ChEBI" id="CHEBI:24996"/>
        <dbReference type="ChEBI" id="CHEBI:29965"/>
        <dbReference type="ChEBI" id="CHEBI:131708"/>
        <dbReference type="EC" id="3.5.1.124"/>
    </reaction>
</comment>
<comment type="catalytic activity">
    <reaction evidence="1">
        <text>N(6)-(1-hydroxy-2-oxopropyl)-L-lysyl-[protein] + H2O = lactate + L-lysyl-[protein] + H(+)</text>
        <dbReference type="Rhea" id="RHEA:49552"/>
        <dbReference type="Rhea" id="RHEA-COMP:9752"/>
        <dbReference type="Rhea" id="RHEA-COMP:12429"/>
        <dbReference type="ChEBI" id="CHEBI:15377"/>
        <dbReference type="ChEBI" id="CHEBI:15378"/>
        <dbReference type="ChEBI" id="CHEBI:24996"/>
        <dbReference type="ChEBI" id="CHEBI:29969"/>
        <dbReference type="ChEBI" id="CHEBI:131709"/>
        <dbReference type="EC" id="3.5.1.124"/>
    </reaction>
</comment>
<comment type="catalytic activity">
    <reaction evidence="1">
        <text>S-(1-hydroxy-2-oxopropyl)-L-cysteinyl-[protein] + H2O = lactate + L-cysteinyl-[protein] + H(+)</text>
        <dbReference type="Rhea" id="RHEA:49556"/>
        <dbReference type="Rhea" id="RHEA-COMP:10131"/>
        <dbReference type="Rhea" id="RHEA-COMP:12430"/>
        <dbReference type="ChEBI" id="CHEBI:15377"/>
        <dbReference type="ChEBI" id="CHEBI:15378"/>
        <dbReference type="ChEBI" id="CHEBI:24996"/>
        <dbReference type="ChEBI" id="CHEBI:29950"/>
        <dbReference type="ChEBI" id="CHEBI:131710"/>
        <dbReference type="EC" id="3.5.1.124"/>
    </reaction>
</comment>
<comment type="catalytic activity">
    <reaction evidence="1">
        <text>N(omega)-(1-hydroxy-2-oxoethyl)-L-arginyl-[protein] + H2O = L-arginyl-[protein] + glycolate + H(+)</text>
        <dbReference type="Rhea" id="RHEA:57188"/>
        <dbReference type="Rhea" id="RHEA-COMP:10532"/>
        <dbReference type="Rhea" id="RHEA-COMP:14844"/>
        <dbReference type="ChEBI" id="CHEBI:15377"/>
        <dbReference type="ChEBI" id="CHEBI:15378"/>
        <dbReference type="ChEBI" id="CHEBI:29805"/>
        <dbReference type="ChEBI" id="CHEBI:29965"/>
        <dbReference type="ChEBI" id="CHEBI:141553"/>
        <dbReference type="EC" id="3.5.1.124"/>
    </reaction>
</comment>
<comment type="catalytic activity">
    <reaction evidence="1">
        <text>N(6)-(1-hydroxy-2-oxoethyl)-L-lysyl-[protein] + H2O = glycolate + L-lysyl-[protein] + H(+)</text>
        <dbReference type="Rhea" id="RHEA:57192"/>
        <dbReference type="Rhea" id="RHEA-COMP:9752"/>
        <dbReference type="Rhea" id="RHEA-COMP:14845"/>
        <dbReference type="ChEBI" id="CHEBI:15377"/>
        <dbReference type="ChEBI" id="CHEBI:15378"/>
        <dbReference type="ChEBI" id="CHEBI:29805"/>
        <dbReference type="ChEBI" id="CHEBI:29969"/>
        <dbReference type="ChEBI" id="CHEBI:141554"/>
        <dbReference type="EC" id="3.5.1.124"/>
    </reaction>
</comment>
<comment type="catalytic activity">
    <reaction evidence="1">
        <text>S-(1-hydroxy-2-oxoethyl)-L-cysteinyl-[protein] + H2O = glycolate + L-cysteinyl-[protein] + H(+)</text>
        <dbReference type="Rhea" id="RHEA:57196"/>
        <dbReference type="Rhea" id="RHEA-COMP:10131"/>
        <dbReference type="Rhea" id="RHEA-COMP:14846"/>
        <dbReference type="ChEBI" id="CHEBI:15377"/>
        <dbReference type="ChEBI" id="CHEBI:15378"/>
        <dbReference type="ChEBI" id="CHEBI:29805"/>
        <dbReference type="ChEBI" id="CHEBI:29950"/>
        <dbReference type="ChEBI" id="CHEBI:141555"/>
        <dbReference type="EC" id="3.5.1.124"/>
    </reaction>
</comment>
<comment type="catalytic activity">
    <reaction evidence="1">
        <text>N(2)-(1-hydroxy-2-oxopropyl)-dGTP + H2O = lactate + dGTP + H(+)</text>
        <dbReference type="Rhea" id="RHEA:57244"/>
        <dbReference type="ChEBI" id="CHEBI:15377"/>
        <dbReference type="ChEBI" id="CHEBI:15378"/>
        <dbReference type="ChEBI" id="CHEBI:24996"/>
        <dbReference type="ChEBI" id="CHEBI:61429"/>
        <dbReference type="ChEBI" id="CHEBI:141569"/>
    </reaction>
</comment>
<comment type="catalytic activity">
    <reaction evidence="1">
        <text>N(2)-(1-hydroxy-2-oxopropyl)-GTP + H2O = lactate + GTP + H(+)</text>
        <dbReference type="Rhea" id="RHEA:57256"/>
        <dbReference type="ChEBI" id="CHEBI:15377"/>
        <dbReference type="ChEBI" id="CHEBI:15378"/>
        <dbReference type="ChEBI" id="CHEBI:24996"/>
        <dbReference type="ChEBI" id="CHEBI:37565"/>
        <dbReference type="ChEBI" id="CHEBI:141570"/>
    </reaction>
</comment>
<comment type="catalytic activity">
    <reaction evidence="1">
        <text>N(2)-(1-hydroxy-2-oxopropyl)-GDP + H2O = lactate + GDP + H(+)</text>
        <dbReference type="Rhea" id="RHEA:57260"/>
        <dbReference type="ChEBI" id="CHEBI:15377"/>
        <dbReference type="ChEBI" id="CHEBI:15378"/>
        <dbReference type="ChEBI" id="CHEBI:24996"/>
        <dbReference type="ChEBI" id="CHEBI:58189"/>
        <dbReference type="ChEBI" id="CHEBI:141573"/>
    </reaction>
</comment>
<comment type="catalytic activity">
    <reaction evidence="1">
        <text>N(2)-(1-hydroxy-2-oxopropyl)-GMP + H2O = lactate + GMP + H(+)</text>
        <dbReference type="Rhea" id="RHEA:57268"/>
        <dbReference type="ChEBI" id="CHEBI:15377"/>
        <dbReference type="ChEBI" id="CHEBI:15378"/>
        <dbReference type="ChEBI" id="CHEBI:24996"/>
        <dbReference type="ChEBI" id="CHEBI:58115"/>
        <dbReference type="ChEBI" id="CHEBI:141575"/>
    </reaction>
</comment>
<comment type="catalytic activity">
    <reaction evidence="1">
        <text>N(2)-(1-hydroxy-2-oxoethyl)-dGTP + H2O = dGTP + glycolate + H(+)</text>
        <dbReference type="Rhea" id="RHEA:57248"/>
        <dbReference type="ChEBI" id="CHEBI:15377"/>
        <dbReference type="ChEBI" id="CHEBI:15378"/>
        <dbReference type="ChEBI" id="CHEBI:29805"/>
        <dbReference type="ChEBI" id="CHEBI:61429"/>
        <dbReference type="ChEBI" id="CHEBI:141572"/>
    </reaction>
</comment>
<comment type="catalytic activity">
    <reaction evidence="1">
        <text>N(2)-(1-hydroxy-2-oxoethyl)-GTP + H2O = glycolate + GTP + H(+)</text>
        <dbReference type="Rhea" id="RHEA:57252"/>
        <dbReference type="ChEBI" id="CHEBI:15377"/>
        <dbReference type="ChEBI" id="CHEBI:15378"/>
        <dbReference type="ChEBI" id="CHEBI:29805"/>
        <dbReference type="ChEBI" id="CHEBI:37565"/>
        <dbReference type="ChEBI" id="CHEBI:141571"/>
    </reaction>
</comment>
<comment type="catalytic activity">
    <reaction evidence="1">
        <text>N(2)-(1-hydroxy-2-oxoethyl)-GDP + H2O = glycolate + GDP + H(+)</text>
        <dbReference type="Rhea" id="RHEA:57264"/>
        <dbReference type="ChEBI" id="CHEBI:15377"/>
        <dbReference type="ChEBI" id="CHEBI:15378"/>
        <dbReference type="ChEBI" id="CHEBI:29805"/>
        <dbReference type="ChEBI" id="CHEBI:58189"/>
        <dbReference type="ChEBI" id="CHEBI:141574"/>
    </reaction>
</comment>
<comment type="catalytic activity">
    <reaction evidence="1">
        <text>N(2)-(1-hydroxy-2-oxoethyl)-GMP + H2O = glycolate + GMP + H(+)</text>
        <dbReference type="Rhea" id="RHEA:57304"/>
        <dbReference type="ChEBI" id="CHEBI:15377"/>
        <dbReference type="ChEBI" id="CHEBI:15378"/>
        <dbReference type="ChEBI" id="CHEBI:29805"/>
        <dbReference type="ChEBI" id="CHEBI:58115"/>
        <dbReference type="ChEBI" id="CHEBI:141576"/>
    </reaction>
</comment>
<comment type="catalytic activity">
    <reaction evidence="1">
        <text>an N(2)-(1-hydroxy-2-oxopropyl)-guanosine in RNA + H2O = a guanosine in RNA + lactate + H(+)</text>
        <dbReference type="Rhea" id="RHEA:57288"/>
        <dbReference type="Rhea" id="RHEA-COMP:14855"/>
        <dbReference type="Rhea" id="RHEA-COMP:14858"/>
        <dbReference type="ChEBI" id="CHEBI:15377"/>
        <dbReference type="ChEBI" id="CHEBI:15378"/>
        <dbReference type="ChEBI" id="CHEBI:24996"/>
        <dbReference type="ChEBI" id="CHEBI:74269"/>
        <dbReference type="ChEBI" id="CHEBI:141580"/>
    </reaction>
</comment>
<comment type="catalytic activity">
    <reaction evidence="1">
        <text>an N(2)-(1-hydroxy-2-oxopropyl)-2'-deoxyguanosine in DNA + H2O = a 2'-deoxyguanosine in DNA + lactate + H(+)</text>
        <dbReference type="Rhea" id="RHEA:57300"/>
        <dbReference type="Rhea" id="RHEA-COMP:11367"/>
        <dbReference type="Rhea" id="RHEA-COMP:14856"/>
        <dbReference type="ChEBI" id="CHEBI:15377"/>
        <dbReference type="ChEBI" id="CHEBI:15378"/>
        <dbReference type="ChEBI" id="CHEBI:24996"/>
        <dbReference type="ChEBI" id="CHEBI:85445"/>
        <dbReference type="ChEBI" id="CHEBI:141578"/>
    </reaction>
</comment>
<comment type="catalytic activity">
    <reaction evidence="1">
        <text>an N(2)-(1-hydroxy-2-oxoethyl)-guanosine in RNA + H2O = a guanosine in RNA + glycolate + H(+)</text>
        <dbReference type="Rhea" id="RHEA:57292"/>
        <dbReference type="Rhea" id="RHEA-COMP:14855"/>
        <dbReference type="Rhea" id="RHEA-COMP:14859"/>
        <dbReference type="ChEBI" id="CHEBI:15377"/>
        <dbReference type="ChEBI" id="CHEBI:15378"/>
        <dbReference type="ChEBI" id="CHEBI:29805"/>
        <dbReference type="ChEBI" id="CHEBI:74269"/>
        <dbReference type="ChEBI" id="CHEBI:141581"/>
    </reaction>
</comment>
<comment type="catalytic activity">
    <reaction evidence="1">
        <text>an N(2)-(1-hydroxy-2-oxoethyl)-2'-deoxyguanosine in DNA + H2O = a 2'-deoxyguanosine in DNA + glycolate + H(+)</text>
        <dbReference type="Rhea" id="RHEA:57296"/>
        <dbReference type="Rhea" id="RHEA-COMP:11367"/>
        <dbReference type="Rhea" id="RHEA-COMP:14857"/>
        <dbReference type="ChEBI" id="CHEBI:15377"/>
        <dbReference type="ChEBI" id="CHEBI:15378"/>
        <dbReference type="ChEBI" id="CHEBI:29805"/>
        <dbReference type="ChEBI" id="CHEBI:85445"/>
        <dbReference type="ChEBI" id="CHEBI:141579"/>
    </reaction>
</comment>
<comment type="subunit">
    <text evidence="1">Homodimer.</text>
</comment>
<comment type="subcellular location">
    <subcellularLocation>
        <location evidence="1">Cytoplasm</location>
    </subcellularLocation>
</comment>
<comment type="induction">
    <text evidence="1">By heat shock.</text>
</comment>
<comment type="similarity">
    <text evidence="1">Belongs to the peptidase C56 family. HchA subfamily.</text>
</comment>
<keyword id="KW-0963">Cytoplasm</keyword>
<keyword id="KW-0227">DNA damage</keyword>
<keyword id="KW-0234">DNA repair</keyword>
<keyword id="KW-0378">Hydrolase</keyword>
<keyword id="KW-0479">Metal-binding</keyword>
<keyword id="KW-0346">Stress response</keyword>
<keyword id="KW-0862">Zinc</keyword>
<protein>
    <recommendedName>
        <fullName evidence="1">Protein/nucleic acid deglycase HchA</fullName>
        <ecNumber evidence="1">3.1.2.-</ecNumber>
        <ecNumber evidence="1">3.5.1.-</ecNumber>
        <ecNumber evidence="1">3.5.1.124</ecNumber>
    </recommendedName>
    <alternativeName>
        <fullName evidence="1">Maillard deglycase</fullName>
    </alternativeName>
</protein>
<name>HCHA_ECO5E</name>
<feature type="chain" id="PRO_1000136175" description="Protein/nucleic acid deglycase HchA">
    <location>
        <begin position="1"/>
        <end position="283"/>
    </location>
</feature>
<feature type="active site" description="Nucleophile" evidence="1">
    <location>
        <position position="185"/>
    </location>
</feature>
<feature type="binding site" evidence="1">
    <location>
        <position position="86"/>
    </location>
    <ligand>
        <name>Zn(2+)</name>
        <dbReference type="ChEBI" id="CHEBI:29105"/>
    </ligand>
</feature>
<feature type="binding site" evidence="1">
    <location>
        <position position="91"/>
    </location>
    <ligand>
        <name>Zn(2+)</name>
        <dbReference type="ChEBI" id="CHEBI:29105"/>
    </ligand>
</feature>
<feature type="binding site" evidence="1">
    <location>
        <position position="123"/>
    </location>
    <ligand>
        <name>Zn(2+)</name>
        <dbReference type="ChEBI" id="CHEBI:29105"/>
    </ligand>
</feature>
<dbReference type="EC" id="3.1.2.-" evidence="1"/>
<dbReference type="EC" id="3.5.1.-" evidence="1"/>
<dbReference type="EC" id="3.5.1.124" evidence="1"/>
<dbReference type="EMBL" id="CP001164">
    <property type="protein sequence ID" value="ACI36666.1"/>
    <property type="molecule type" value="Genomic_DNA"/>
</dbReference>
<dbReference type="RefSeq" id="WP_000218228.1">
    <property type="nucleotide sequence ID" value="NC_011353.1"/>
</dbReference>
<dbReference type="SMR" id="B5YSJ3"/>
<dbReference type="MEROPS" id="C56.006"/>
<dbReference type="KEGG" id="ecf:ECH74115_2746"/>
<dbReference type="HOGENOM" id="CLU_066933_0_0_6"/>
<dbReference type="GO" id="GO:0005737">
    <property type="term" value="C:cytoplasm"/>
    <property type="evidence" value="ECO:0007669"/>
    <property type="project" value="UniProtKB-SubCell"/>
</dbReference>
<dbReference type="GO" id="GO:0019172">
    <property type="term" value="F:glyoxalase III activity"/>
    <property type="evidence" value="ECO:0007669"/>
    <property type="project" value="TreeGrafter"/>
</dbReference>
<dbReference type="GO" id="GO:0036524">
    <property type="term" value="F:protein deglycase activity"/>
    <property type="evidence" value="ECO:0007669"/>
    <property type="project" value="UniProtKB-UniRule"/>
</dbReference>
<dbReference type="GO" id="GO:0016790">
    <property type="term" value="F:thiolester hydrolase activity"/>
    <property type="evidence" value="ECO:0007669"/>
    <property type="project" value="UniProtKB-UniRule"/>
</dbReference>
<dbReference type="GO" id="GO:0008270">
    <property type="term" value="F:zinc ion binding"/>
    <property type="evidence" value="ECO:0007669"/>
    <property type="project" value="UniProtKB-UniRule"/>
</dbReference>
<dbReference type="GO" id="GO:0006281">
    <property type="term" value="P:DNA repair"/>
    <property type="evidence" value="ECO:0007669"/>
    <property type="project" value="UniProtKB-UniRule"/>
</dbReference>
<dbReference type="GO" id="GO:0019243">
    <property type="term" value="P:methylglyoxal catabolic process to D-lactate via S-lactoyl-glutathione"/>
    <property type="evidence" value="ECO:0007669"/>
    <property type="project" value="TreeGrafter"/>
</dbReference>
<dbReference type="GO" id="GO:0030091">
    <property type="term" value="P:protein repair"/>
    <property type="evidence" value="ECO:0007669"/>
    <property type="project" value="UniProtKB-UniRule"/>
</dbReference>
<dbReference type="FunFam" id="3.40.50.880:FF:000026">
    <property type="entry name" value="Protein/nucleic acid deglycase HchA"/>
    <property type="match status" value="1"/>
</dbReference>
<dbReference type="Gene3D" id="3.40.50.880">
    <property type="match status" value="1"/>
</dbReference>
<dbReference type="HAMAP" id="MF_01046">
    <property type="entry name" value="Deglycase_HchA"/>
    <property type="match status" value="1"/>
</dbReference>
<dbReference type="InterPro" id="IPR029062">
    <property type="entry name" value="Class_I_gatase-like"/>
</dbReference>
<dbReference type="InterPro" id="IPR017283">
    <property type="entry name" value="HchA"/>
</dbReference>
<dbReference type="InterPro" id="IPR050325">
    <property type="entry name" value="Prot/Nucl_acid_deglycase"/>
</dbReference>
<dbReference type="NCBIfam" id="NF003168">
    <property type="entry name" value="PRK04155.1"/>
    <property type="match status" value="1"/>
</dbReference>
<dbReference type="PANTHER" id="PTHR48094">
    <property type="entry name" value="PROTEIN/NUCLEIC ACID DEGLYCASE DJ-1-RELATED"/>
    <property type="match status" value="1"/>
</dbReference>
<dbReference type="PANTHER" id="PTHR48094:SF20">
    <property type="entry name" value="PROTEIN_NUCLEIC ACID DEGLYCASE 1"/>
    <property type="match status" value="1"/>
</dbReference>
<dbReference type="PIRSF" id="PIRSF037798">
    <property type="entry name" value="Chaperone_HchA"/>
    <property type="match status" value="1"/>
</dbReference>
<dbReference type="SUPFAM" id="SSF52317">
    <property type="entry name" value="Class I glutamine amidotransferase-like"/>
    <property type="match status" value="1"/>
</dbReference>
<proteinExistence type="inferred from homology"/>
<evidence type="ECO:0000255" key="1">
    <source>
        <dbReference type="HAMAP-Rule" id="MF_01046"/>
    </source>
</evidence>
<gene>
    <name evidence="1" type="primary">hchA</name>
    <name type="ordered locus">ECH74115_2746</name>
</gene>
<accession>B5YSJ3</accession>
<sequence>MTVQTSKNPQVDIAEDNAFFPSEYSLSQYTSPVSDLDGVDYPKPYRGKHKILVIAADERYLPTDNGKLFSTGNHPIETLLPLYHLHAAGFEFEVATISGLMTKFEYWAMPQKDEKVMPFFEQHKSLFRNPKKLADVVASLNADSEYAAIFVPGGHGALIGLPESQDVAAALQWAIKNDRFVISLCHGPAAFLALRHGDNPLNGYSICAFPDAADKQTPEIGYMPGHLTWYFGEELKKMGMNIINDDITGRVHKDRKLLTGDSPFAANALGKLAAQEMLAAYAG</sequence>